<organism>
    <name type="scientific">Arabidopsis thaliana</name>
    <name type="common">Mouse-ear cress</name>
    <dbReference type="NCBI Taxonomy" id="3702"/>
    <lineage>
        <taxon>Eukaryota</taxon>
        <taxon>Viridiplantae</taxon>
        <taxon>Streptophyta</taxon>
        <taxon>Embryophyta</taxon>
        <taxon>Tracheophyta</taxon>
        <taxon>Spermatophyta</taxon>
        <taxon>Magnoliopsida</taxon>
        <taxon>eudicotyledons</taxon>
        <taxon>Gunneridae</taxon>
        <taxon>Pentapetalae</taxon>
        <taxon>rosids</taxon>
        <taxon>malvids</taxon>
        <taxon>Brassicales</taxon>
        <taxon>Brassicaceae</taxon>
        <taxon>Camelineae</taxon>
        <taxon>Arabidopsis</taxon>
    </lineage>
</organism>
<accession>Q9LYZ2</accession>
<gene>
    <name type="ordered locus">At5g02930</name>
    <name type="ORF">F9G14.240</name>
</gene>
<keyword id="KW-0433">Leucine-rich repeat</keyword>
<keyword id="KW-1185">Reference proteome</keyword>
<keyword id="KW-0677">Repeat</keyword>
<protein>
    <recommendedName>
        <fullName>Putative F-box/LRR-repeat protein At5g02930</fullName>
    </recommendedName>
</protein>
<dbReference type="EMBL" id="AL162973">
    <property type="protein sequence ID" value="CAB86047.1"/>
    <property type="molecule type" value="Genomic_DNA"/>
</dbReference>
<dbReference type="EMBL" id="CP002688">
    <property type="protein sequence ID" value="AED90537.1"/>
    <property type="molecule type" value="Genomic_DNA"/>
</dbReference>
<dbReference type="PIR" id="T48314">
    <property type="entry name" value="T48314"/>
</dbReference>
<dbReference type="RefSeq" id="NP_195913.1">
    <property type="nucleotide sequence ID" value="NM_120371.2"/>
</dbReference>
<dbReference type="BioGRID" id="17013">
    <property type="interactions" value="1"/>
</dbReference>
<dbReference type="FunCoup" id="Q9LYZ2">
    <property type="interactions" value="383"/>
</dbReference>
<dbReference type="PaxDb" id="3702-AT5G02930.1"/>
<dbReference type="EnsemblPlants" id="AT5G02930.1">
    <property type="protein sequence ID" value="AT5G02930.1"/>
    <property type="gene ID" value="AT5G02930"/>
</dbReference>
<dbReference type="GeneID" id="831737"/>
<dbReference type="Gramene" id="AT5G02930.1">
    <property type="protein sequence ID" value="AT5G02930.1"/>
    <property type="gene ID" value="AT5G02930"/>
</dbReference>
<dbReference type="KEGG" id="ath:AT5G02930"/>
<dbReference type="Araport" id="AT5G02930"/>
<dbReference type="TAIR" id="AT5G02930"/>
<dbReference type="HOGENOM" id="CLU_010721_5_0_1"/>
<dbReference type="InParanoid" id="Q9LYZ2"/>
<dbReference type="OMA" id="CIRQRNV"/>
<dbReference type="PhylomeDB" id="Q9LYZ2"/>
<dbReference type="PRO" id="PR:Q9LYZ2"/>
<dbReference type="Proteomes" id="UP000006548">
    <property type="component" value="Chromosome 5"/>
</dbReference>
<dbReference type="ExpressionAtlas" id="Q9LYZ2">
    <property type="expression patterns" value="baseline and differential"/>
</dbReference>
<dbReference type="CDD" id="cd22160">
    <property type="entry name" value="F-box_AtFBL13-like"/>
    <property type="match status" value="1"/>
</dbReference>
<dbReference type="Gene3D" id="1.20.1280.50">
    <property type="match status" value="1"/>
</dbReference>
<dbReference type="Gene3D" id="3.80.10.10">
    <property type="entry name" value="Ribonuclease Inhibitor"/>
    <property type="match status" value="1"/>
</dbReference>
<dbReference type="InterPro" id="IPR036047">
    <property type="entry name" value="F-box-like_dom_sf"/>
</dbReference>
<dbReference type="InterPro" id="IPR053781">
    <property type="entry name" value="F-box_AtFBL13-like"/>
</dbReference>
<dbReference type="InterPro" id="IPR001810">
    <property type="entry name" value="F-box_dom"/>
</dbReference>
<dbReference type="InterPro" id="IPR044997">
    <property type="entry name" value="F-box_plant"/>
</dbReference>
<dbReference type="InterPro" id="IPR055357">
    <property type="entry name" value="LRR_At1g61320_AtMIF1"/>
</dbReference>
<dbReference type="InterPro" id="IPR032675">
    <property type="entry name" value="LRR_dom_sf"/>
</dbReference>
<dbReference type="PANTHER" id="PTHR32153">
    <property type="entry name" value="OJ000223_09.16 PROTEIN"/>
    <property type="match status" value="1"/>
</dbReference>
<dbReference type="Pfam" id="PF00646">
    <property type="entry name" value="F-box"/>
    <property type="match status" value="1"/>
</dbReference>
<dbReference type="Pfam" id="PF23622">
    <property type="entry name" value="LRR_At1g61320_AtMIF1"/>
    <property type="match status" value="1"/>
</dbReference>
<dbReference type="SMART" id="SM00256">
    <property type="entry name" value="FBOX"/>
    <property type="match status" value="1"/>
</dbReference>
<dbReference type="SUPFAM" id="SSF81383">
    <property type="entry name" value="F-box domain"/>
    <property type="match status" value="1"/>
</dbReference>
<dbReference type="SUPFAM" id="SSF52047">
    <property type="entry name" value="RNI-like"/>
    <property type="match status" value="1"/>
</dbReference>
<dbReference type="PROSITE" id="PS50181">
    <property type="entry name" value="FBOX"/>
    <property type="match status" value="1"/>
</dbReference>
<sequence>MRFKQPSRRDRPVMFKRSKNVSVDVGVDSISDLPDAVLQHIFSYIPTELAIRTSVLSKRWRHVWSETPHLSFEWLKVSPKLINKTLASYTASKIKSFHLCTRYSYEADTHHVNSSIEFAMSHNVDDLSLAFRRCSPFYNFDDCFYTNSSLKRVELRYVDLMPRCMVSWTSLKNLSLTDCTMSDESFLEILSGCPILESLSLKFCMSLKYLNLSKSLRLTRLEIERISYIRAPMLSMQIVAPYIHYLRLRDSEAHCTFVDVSSLTEANVDVSTFHPRTCYHDFDPLDPHDLLVMVQTMLKTFQKVEKLTLGVNLLQMLSLSKIPSLPLPMLKVKTLTLETMIIRSVVPGIARLLQNLPGLKKITVYTTNPCNTEVEPCVNSYLDAQDLNPDQWWRLDDVVFPISSEYEVLKPEIMASFMELLLANTRTLETLVVELGSCVARSRFKELFQIALTLSHDKKVSIMLKRSNG</sequence>
<proteinExistence type="predicted"/>
<evidence type="ECO:0000255" key="1">
    <source>
        <dbReference type="PROSITE-ProRule" id="PRU00080"/>
    </source>
</evidence>
<name>FBL80_ARATH</name>
<feature type="chain" id="PRO_0000281977" description="Putative F-box/LRR-repeat protein At5g02930">
    <location>
        <begin position="1"/>
        <end position="469"/>
    </location>
</feature>
<feature type="domain" description="F-box" evidence="1">
    <location>
        <begin position="27"/>
        <end position="77"/>
    </location>
</feature>
<feature type="repeat" description="LRR 1">
    <location>
        <begin position="30"/>
        <end position="58"/>
    </location>
</feature>
<feature type="repeat" description="LRR 2">
    <location>
        <begin position="178"/>
        <end position="203"/>
    </location>
</feature>
<feature type="repeat" description="LRR 3">
    <location>
        <begin position="204"/>
        <end position="214"/>
    </location>
</feature>
<feature type="repeat" description="LRR 4">
    <location>
        <begin position="223"/>
        <end position="250"/>
    </location>
</feature>
<feature type="repeat" description="LRR 5">
    <location>
        <begin position="296"/>
        <end position="321"/>
    </location>
</feature>
<feature type="repeat" description="LRR 6">
    <location>
        <begin position="341"/>
        <end position="366"/>
    </location>
</feature>
<reference key="1">
    <citation type="journal article" date="2000" name="Nature">
        <title>Sequence and analysis of chromosome 5 of the plant Arabidopsis thaliana.</title>
        <authorList>
            <person name="Tabata S."/>
            <person name="Kaneko T."/>
            <person name="Nakamura Y."/>
            <person name="Kotani H."/>
            <person name="Kato T."/>
            <person name="Asamizu E."/>
            <person name="Miyajima N."/>
            <person name="Sasamoto S."/>
            <person name="Kimura T."/>
            <person name="Hosouchi T."/>
            <person name="Kawashima K."/>
            <person name="Kohara M."/>
            <person name="Matsumoto M."/>
            <person name="Matsuno A."/>
            <person name="Muraki A."/>
            <person name="Nakayama S."/>
            <person name="Nakazaki N."/>
            <person name="Naruo K."/>
            <person name="Okumura S."/>
            <person name="Shinpo S."/>
            <person name="Takeuchi C."/>
            <person name="Wada T."/>
            <person name="Watanabe A."/>
            <person name="Yamada M."/>
            <person name="Yasuda M."/>
            <person name="Sato S."/>
            <person name="de la Bastide M."/>
            <person name="Huang E."/>
            <person name="Spiegel L."/>
            <person name="Gnoj L."/>
            <person name="O'Shaughnessy A."/>
            <person name="Preston R."/>
            <person name="Habermann K."/>
            <person name="Murray J."/>
            <person name="Johnson D."/>
            <person name="Rohlfing T."/>
            <person name="Nelson J."/>
            <person name="Stoneking T."/>
            <person name="Pepin K."/>
            <person name="Spieth J."/>
            <person name="Sekhon M."/>
            <person name="Armstrong J."/>
            <person name="Becker M."/>
            <person name="Belter E."/>
            <person name="Cordum H."/>
            <person name="Cordes M."/>
            <person name="Courtney L."/>
            <person name="Courtney W."/>
            <person name="Dante M."/>
            <person name="Du H."/>
            <person name="Edwards J."/>
            <person name="Fryman J."/>
            <person name="Haakensen B."/>
            <person name="Lamar E."/>
            <person name="Latreille P."/>
            <person name="Leonard S."/>
            <person name="Meyer R."/>
            <person name="Mulvaney E."/>
            <person name="Ozersky P."/>
            <person name="Riley A."/>
            <person name="Strowmatt C."/>
            <person name="Wagner-McPherson C."/>
            <person name="Wollam A."/>
            <person name="Yoakum M."/>
            <person name="Bell M."/>
            <person name="Dedhia N."/>
            <person name="Parnell L."/>
            <person name="Shah R."/>
            <person name="Rodriguez M."/>
            <person name="Hoon See L."/>
            <person name="Vil D."/>
            <person name="Baker J."/>
            <person name="Kirchoff K."/>
            <person name="Toth K."/>
            <person name="King L."/>
            <person name="Bahret A."/>
            <person name="Miller B."/>
            <person name="Marra M.A."/>
            <person name="Martienssen R."/>
            <person name="McCombie W.R."/>
            <person name="Wilson R.K."/>
            <person name="Murphy G."/>
            <person name="Bancroft I."/>
            <person name="Volckaert G."/>
            <person name="Wambutt R."/>
            <person name="Duesterhoeft A."/>
            <person name="Stiekema W."/>
            <person name="Pohl T."/>
            <person name="Entian K.-D."/>
            <person name="Terryn N."/>
            <person name="Hartley N."/>
            <person name="Bent E."/>
            <person name="Johnson S."/>
            <person name="Langham S.-A."/>
            <person name="McCullagh B."/>
            <person name="Robben J."/>
            <person name="Grymonprez B."/>
            <person name="Zimmermann W."/>
            <person name="Ramsperger U."/>
            <person name="Wedler H."/>
            <person name="Balke K."/>
            <person name="Wedler E."/>
            <person name="Peters S."/>
            <person name="van Staveren M."/>
            <person name="Dirkse W."/>
            <person name="Mooijman P."/>
            <person name="Klein Lankhorst R."/>
            <person name="Weitzenegger T."/>
            <person name="Bothe G."/>
            <person name="Rose M."/>
            <person name="Hauf J."/>
            <person name="Berneiser S."/>
            <person name="Hempel S."/>
            <person name="Feldpausch M."/>
            <person name="Lamberth S."/>
            <person name="Villarroel R."/>
            <person name="Gielen J."/>
            <person name="Ardiles W."/>
            <person name="Bents O."/>
            <person name="Lemcke K."/>
            <person name="Kolesov G."/>
            <person name="Mayer K.F.X."/>
            <person name="Rudd S."/>
            <person name="Schoof H."/>
            <person name="Schueller C."/>
            <person name="Zaccaria P."/>
            <person name="Mewes H.-W."/>
            <person name="Bevan M."/>
            <person name="Fransz P.F."/>
        </authorList>
    </citation>
    <scope>NUCLEOTIDE SEQUENCE [LARGE SCALE GENOMIC DNA]</scope>
    <source>
        <strain>cv. Columbia</strain>
    </source>
</reference>
<reference key="2">
    <citation type="journal article" date="2017" name="Plant J.">
        <title>Araport11: a complete reannotation of the Arabidopsis thaliana reference genome.</title>
        <authorList>
            <person name="Cheng C.Y."/>
            <person name="Krishnakumar V."/>
            <person name="Chan A.P."/>
            <person name="Thibaud-Nissen F."/>
            <person name="Schobel S."/>
            <person name="Town C.D."/>
        </authorList>
    </citation>
    <scope>GENOME REANNOTATION</scope>
    <source>
        <strain>cv. Columbia</strain>
    </source>
</reference>